<gene>
    <name evidence="8" type="primary">PTC52</name>
    <name evidence="9" type="synonym">ACD1-like</name>
    <name evidence="8" type="synonym">TIC55-IV</name>
    <name evidence="10" type="ordered locus">At4g25650</name>
    <name evidence="11" type="ORF">L73G19.30</name>
</gene>
<accession>Q8W496</accession>
<accession>Q93WJ7</accession>
<accession>Q9SZZ3</accession>
<reference key="1">
    <citation type="journal article" date="2002" name="Plant Physiol.">
        <title>Light-dependent death of maize lls1 cells is mediated by mature chloroplasts.</title>
        <authorList>
            <person name="Gray J."/>
            <person name="Janick-Buckner D."/>
            <person name="Buckner B."/>
            <person name="Close P.S."/>
            <person name="Johal G.S."/>
        </authorList>
    </citation>
    <scope>NUCLEOTIDE SEQUENCE [MRNA] (ISOFORM 2)</scope>
</reference>
<reference key="2">
    <citation type="journal article" date="1999" name="Nature">
        <title>Sequence and analysis of chromosome 4 of the plant Arabidopsis thaliana.</title>
        <authorList>
            <person name="Mayer K.F.X."/>
            <person name="Schueller C."/>
            <person name="Wambutt R."/>
            <person name="Murphy G."/>
            <person name="Volckaert G."/>
            <person name="Pohl T."/>
            <person name="Duesterhoeft A."/>
            <person name="Stiekema W."/>
            <person name="Entian K.-D."/>
            <person name="Terryn N."/>
            <person name="Harris B."/>
            <person name="Ansorge W."/>
            <person name="Brandt P."/>
            <person name="Grivell L.A."/>
            <person name="Rieger M."/>
            <person name="Weichselgartner M."/>
            <person name="de Simone V."/>
            <person name="Obermaier B."/>
            <person name="Mache R."/>
            <person name="Mueller M."/>
            <person name="Kreis M."/>
            <person name="Delseny M."/>
            <person name="Puigdomenech P."/>
            <person name="Watson M."/>
            <person name="Schmidtheini T."/>
            <person name="Reichert B."/>
            <person name="Portetelle D."/>
            <person name="Perez-Alonso M."/>
            <person name="Boutry M."/>
            <person name="Bancroft I."/>
            <person name="Vos P."/>
            <person name="Hoheisel J."/>
            <person name="Zimmermann W."/>
            <person name="Wedler H."/>
            <person name="Ridley P."/>
            <person name="Langham S.-A."/>
            <person name="McCullagh B."/>
            <person name="Bilham L."/>
            <person name="Robben J."/>
            <person name="van der Schueren J."/>
            <person name="Grymonprez B."/>
            <person name="Chuang Y.-J."/>
            <person name="Vandenbussche F."/>
            <person name="Braeken M."/>
            <person name="Weltjens I."/>
            <person name="Voet M."/>
            <person name="Bastiaens I."/>
            <person name="Aert R."/>
            <person name="Defoor E."/>
            <person name="Weitzenegger T."/>
            <person name="Bothe G."/>
            <person name="Ramsperger U."/>
            <person name="Hilbert H."/>
            <person name="Braun M."/>
            <person name="Holzer E."/>
            <person name="Brandt A."/>
            <person name="Peters S."/>
            <person name="van Staveren M."/>
            <person name="Dirkse W."/>
            <person name="Mooijman P."/>
            <person name="Klein Lankhorst R."/>
            <person name="Rose M."/>
            <person name="Hauf J."/>
            <person name="Koetter P."/>
            <person name="Berneiser S."/>
            <person name="Hempel S."/>
            <person name="Feldpausch M."/>
            <person name="Lamberth S."/>
            <person name="Van den Daele H."/>
            <person name="De Keyser A."/>
            <person name="Buysshaert C."/>
            <person name="Gielen J."/>
            <person name="Villarroel R."/>
            <person name="De Clercq R."/>
            <person name="van Montagu M."/>
            <person name="Rogers J."/>
            <person name="Cronin A."/>
            <person name="Quail M.A."/>
            <person name="Bray-Allen S."/>
            <person name="Clark L."/>
            <person name="Doggett J."/>
            <person name="Hall S."/>
            <person name="Kay M."/>
            <person name="Lennard N."/>
            <person name="McLay K."/>
            <person name="Mayes R."/>
            <person name="Pettett A."/>
            <person name="Rajandream M.A."/>
            <person name="Lyne M."/>
            <person name="Benes V."/>
            <person name="Rechmann S."/>
            <person name="Borkova D."/>
            <person name="Bloecker H."/>
            <person name="Scharfe M."/>
            <person name="Grimm M."/>
            <person name="Loehnert T.-H."/>
            <person name="Dose S."/>
            <person name="de Haan M."/>
            <person name="Maarse A.C."/>
            <person name="Schaefer M."/>
            <person name="Mueller-Auer S."/>
            <person name="Gabel C."/>
            <person name="Fuchs M."/>
            <person name="Fartmann B."/>
            <person name="Granderath K."/>
            <person name="Dauner D."/>
            <person name="Herzl A."/>
            <person name="Neumann S."/>
            <person name="Argiriou A."/>
            <person name="Vitale D."/>
            <person name="Liguori R."/>
            <person name="Piravandi E."/>
            <person name="Massenet O."/>
            <person name="Quigley F."/>
            <person name="Clabauld G."/>
            <person name="Muendlein A."/>
            <person name="Felber R."/>
            <person name="Schnabl S."/>
            <person name="Hiller R."/>
            <person name="Schmidt W."/>
            <person name="Lecharny A."/>
            <person name="Aubourg S."/>
            <person name="Chefdor F."/>
            <person name="Cooke R."/>
            <person name="Berger C."/>
            <person name="Monfort A."/>
            <person name="Casacuberta E."/>
            <person name="Gibbons T."/>
            <person name="Weber N."/>
            <person name="Vandenbol M."/>
            <person name="Bargues M."/>
            <person name="Terol J."/>
            <person name="Torres A."/>
            <person name="Perez-Perez A."/>
            <person name="Purnelle B."/>
            <person name="Bent E."/>
            <person name="Johnson S."/>
            <person name="Tacon D."/>
            <person name="Jesse T."/>
            <person name="Heijnen L."/>
            <person name="Schwarz S."/>
            <person name="Scholler P."/>
            <person name="Heber S."/>
            <person name="Francs P."/>
            <person name="Bielke C."/>
            <person name="Frishman D."/>
            <person name="Haase D."/>
            <person name="Lemcke K."/>
            <person name="Mewes H.-W."/>
            <person name="Stocker S."/>
            <person name="Zaccaria P."/>
            <person name="Bevan M."/>
            <person name="Wilson R.K."/>
            <person name="de la Bastide M."/>
            <person name="Habermann K."/>
            <person name="Parnell L."/>
            <person name="Dedhia N."/>
            <person name="Gnoj L."/>
            <person name="Schutz K."/>
            <person name="Huang E."/>
            <person name="Spiegel L."/>
            <person name="Sekhon M."/>
            <person name="Murray J."/>
            <person name="Sheet P."/>
            <person name="Cordes M."/>
            <person name="Abu-Threideh J."/>
            <person name="Stoneking T."/>
            <person name="Kalicki J."/>
            <person name="Graves T."/>
            <person name="Harmon G."/>
            <person name="Edwards J."/>
            <person name="Latreille P."/>
            <person name="Courtney L."/>
            <person name="Cloud J."/>
            <person name="Abbott A."/>
            <person name="Scott K."/>
            <person name="Johnson D."/>
            <person name="Minx P."/>
            <person name="Bentley D."/>
            <person name="Fulton B."/>
            <person name="Miller N."/>
            <person name="Greco T."/>
            <person name="Kemp K."/>
            <person name="Kramer J."/>
            <person name="Fulton L."/>
            <person name="Mardis E."/>
            <person name="Dante M."/>
            <person name="Pepin K."/>
            <person name="Hillier L.W."/>
            <person name="Nelson J."/>
            <person name="Spieth J."/>
            <person name="Ryan E."/>
            <person name="Andrews S."/>
            <person name="Geisel C."/>
            <person name="Layman D."/>
            <person name="Du H."/>
            <person name="Ali J."/>
            <person name="Berghoff A."/>
            <person name="Jones K."/>
            <person name="Drone K."/>
            <person name="Cotton M."/>
            <person name="Joshu C."/>
            <person name="Antonoiu B."/>
            <person name="Zidanic M."/>
            <person name="Strong C."/>
            <person name="Sun H."/>
            <person name="Lamar B."/>
            <person name="Yordan C."/>
            <person name="Ma P."/>
            <person name="Zhong J."/>
            <person name="Preston R."/>
            <person name="Vil D."/>
            <person name="Shekher M."/>
            <person name="Matero A."/>
            <person name="Shah R."/>
            <person name="Swaby I.K."/>
            <person name="O'Shaughnessy A."/>
            <person name="Rodriguez M."/>
            <person name="Hoffman J."/>
            <person name="Till S."/>
            <person name="Granat S."/>
            <person name="Shohdy N."/>
            <person name="Hasegawa A."/>
            <person name="Hameed A."/>
            <person name="Lodhi M."/>
            <person name="Johnson A."/>
            <person name="Chen E."/>
            <person name="Marra M.A."/>
            <person name="Martienssen R."/>
            <person name="McCombie W.R."/>
        </authorList>
    </citation>
    <scope>NUCLEOTIDE SEQUENCE [LARGE SCALE GENOMIC DNA]</scope>
    <source>
        <strain>cv. Columbia</strain>
    </source>
</reference>
<reference key="3">
    <citation type="journal article" date="2017" name="Plant J.">
        <title>Araport11: a complete reannotation of the Arabidopsis thaliana reference genome.</title>
        <authorList>
            <person name="Cheng C.Y."/>
            <person name="Krishnakumar V."/>
            <person name="Chan A.P."/>
            <person name="Thibaud-Nissen F."/>
            <person name="Schobel S."/>
            <person name="Town C.D."/>
        </authorList>
    </citation>
    <scope>GENOME REANNOTATION</scope>
    <source>
        <strain>cv. Columbia</strain>
    </source>
</reference>
<reference key="4">
    <citation type="journal article" date="2003" name="Science">
        <title>Empirical analysis of transcriptional activity in the Arabidopsis genome.</title>
        <authorList>
            <person name="Yamada K."/>
            <person name="Lim J."/>
            <person name="Dale J.M."/>
            <person name="Chen H."/>
            <person name="Shinn P."/>
            <person name="Palm C.J."/>
            <person name="Southwick A.M."/>
            <person name="Wu H.C."/>
            <person name="Kim C.J."/>
            <person name="Nguyen M."/>
            <person name="Pham P.K."/>
            <person name="Cheuk R.F."/>
            <person name="Karlin-Newmann G."/>
            <person name="Liu S.X."/>
            <person name="Lam B."/>
            <person name="Sakano H."/>
            <person name="Wu T."/>
            <person name="Yu G."/>
            <person name="Miranda M."/>
            <person name="Quach H.L."/>
            <person name="Tripp M."/>
            <person name="Chang C.H."/>
            <person name="Lee J.M."/>
            <person name="Toriumi M.J."/>
            <person name="Chan M.M."/>
            <person name="Tang C.C."/>
            <person name="Onodera C.S."/>
            <person name="Deng J.M."/>
            <person name="Akiyama K."/>
            <person name="Ansari Y."/>
            <person name="Arakawa T."/>
            <person name="Banh J."/>
            <person name="Banno F."/>
            <person name="Bowser L."/>
            <person name="Brooks S.Y."/>
            <person name="Carninci P."/>
            <person name="Chao Q."/>
            <person name="Choy N."/>
            <person name="Enju A."/>
            <person name="Goldsmith A.D."/>
            <person name="Gurjal M."/>
            <person name="Hansen N.F."/>
            <person name="Hayashizaki Y."/>
            <person name="Johnson-Hopson C."/>
            <person name="Hsuan V.W."/>
            <person name="Iida K."/>
            <person name="Karnes M."/>
            <person name="Khan S."/>
            <person name="Koesema E."/>
            <person name="Ishida J."/>
            <person name="Jiang P.X."/>
            <person name="Jones T."/>
            <person name="Kawai J."/>
            <person name="Kamiya A."/>
            <person name="Meyers C."/>
            <person name="Nakajima M."/>
            <person name="Narusaka M."/>
            <person name="Seki M."/>
            <person name="Sakurai T."/>
            <person name="Satou M."/>
            <person name="Tamse R."/>
            <person name="Vaysberg M."/>
            <person name="Wallender E.K."/>
            <person name="Wong C."/>
            <person name="Yamamura Y."/>
            <person name="Yuan S."/>
            <person name="Shinozaki K."/>
            <person name="Davis R.W."/>
            <person name="Theologis A."/>
            <person name="Ecker J.R."/>
        </authorList>
    </citation>
    <scope>NUCLEOTIDE SEQUENCE [LARGE SCALE MRNA] (ISOFORMS 1 AND 2)</scope>
    <source>
        <strain>cv. Columbia</strain>
    </source>
</reference>
<reference key="5">
    <citation type="journal article" date="2008" name="Proc. Natl. Acad. Sci. U.S.A.">
        <title>Three thioredoxin targets in the inner envelope membrane of chloroplasts function in protein import and chlorophyll metabolism.</title>
        <authorList>
            <person name="Bartsch S."/>
            <person name="Monnet J."/>
            <person name="Selbach K."/>
            <person name="Quigley F."/>
            <person name="Gray J."/>
            <person name="von Wettstein D."/>
            <person name="Reinbothe S."/>
            <person name="Reinbothe C."/>
        </authorList>
    </citation>
    <scope>FUNCTION</scope>
    <scope>ACTIVITY REGULATION</scope>
    <scope>CATALYTIC ACTIVITY</scope>
</reference>
<reference key="6">
    <citation type="journal article" date="2009" name="Mol. Plant">
        <title>In vivo studies on the roles of Tic55-related proteins in chloroplast protein import in Arabidopsis thaliana.</title>
        <authorList>
            <person name="Boij P."/>
            <person name="Patel R."/>
            <person name="Garcia C."/>
            <person name="Jarvis P."/>
            <person name="Aronsson H."/>
        </authorList>
    </citation>
    <scope>DISRUPTION PHENOTYPE</scope>
</reference>
<protein>
    <recommendedName>
        <fullName evidence="8">Protochlorophyllide-dependent translocon component 52, chloroplastic</fullName>
        <ecNumber evidence="4">1.14.15.-</ecNumber>
    </recommendedName>
    <alternativeName>
        <fullName evidence="9">ACD1-like protein</fullName>
    </alternativeName>
    <alternativeName>
        <fullName evidence="8">Protein TIC 55-IV</fullName>
    </alternativeName>
    <alternativeName>
        <fullName evidence="8">Translocon at the inner envelope membrane of chloroplasts 55-IV</fullName>
    </alternativeName>
</protein>
<name>PTC52_ARATH</name>
<comment type="function">
    <text evidence="4">Part of a translocon most abundantly expressed in etiolated plants and involved in the protochlorophyllide-dependent import of the precursor NADPH:protochlorophyllide oxidoreductase A (pPORA).</text>
</comment>
<comment type="catalytic activity">
    <reaction evidence="4">
        <text>protochlorophyllide a + 4 reduced [2Fe-2S]-[ferredoxin] + 2 O2 + 5 H(+) = protochlorophyllide b + 4 oxidized [2Fe-2S]-[ferredoxin] + 3 H2O</text>
        <dbReference type="Rhea" id="RHEA:73459"/>
        <dbReference type="Rhea" id="RHEA-COMP:10000"/>
        <dbReference type="Rhea" id="RHEA-COMP:10001"/>
        <dbReference type="ChEBI" id="CHEBI:15377"/>
        <dbReference type="ChEBI" id="CHEBI:15378"/>
        <dbReference type="ChEBI" id="CHEBI:15379"/>
        <dbReference type="ChEBI" id="CHEBI:33737"/>
        <dbReference type="ChEBI" id="CHEBI:33738"/>
        <dbReference type="ChEBI" id="CHEBI:83350"/>
        <dbReference type="ChEBI" id="CHEBI:192818"/>
    </reaction>
    <physiologicalReaction direction="left-to-right" evidence="9">
        <dbReference type="Rhea" id="RHEA:73460"/>
    </physiologicalReaction>
</comment>
<comment type="cofactor">
    <cofactor evidence="2">
        <name>[2Fe-2S] cluster</name>
        <dbReference type="ChEBI" id="CHEBI:190135"/>
    </cofactor>
    <text evidence="2">Binds 1 [2Fe-2S] cluster per subunit.</text>
</comment>
<comment type="activity regulation">
    <text evidence="4">Down-regulated by light.</text>
</comment>
<comment type="subcellular location">
    <subcellularLocation>
        <location evidence="9">Plastid</location>
        <location evidence="9">Chloroplast inner membrane</location>
        <topology evidence="9">Multi-pass membrane protein</topology>
    </subcellularLocation>
</comment>
<comment type="alternative products">
    <event type="alternative splicing"/>
    <isoform>
        <id>Q8W496-1</id>
        <name>1</name>
        <sequence type="displayed"/>
    </isoform>
    <isoform>
        <id>Q8W496-2</id>
        <name>2</name>
        <sequence type="described" ref="VSP_041956"/>
    </isoform>
</comment>
<comment type="disruption phenotype">
    <text evidence="5">No visible phenotype.</text>
</comment>
<comment type="sequence caution" evidence="9">
    <conflict type="erroneous gene model prediction">
        <sequence resource="EMBL-CDS" id="CAB43696"/>
    </conflict>
</comment>
<comment type="sequence caution" evidence="9">
    <conflict type="erroneous gene model prediction">
        <sequence resource="EMBL-CDS" id="CAB81375"/>
    </conflict>
</comment>
<evidence type="ECO:0000255" key="1"/>
<evidence type="ECO:0000255" key="2">
    <source>
        <dbReference type="PROSITE-ProRule" id="PRU00628"/>
    </source>
</evidence>
<evidence type="ECO:0000256" key="3">
    <source>
        <dbReference type="SAM" id="MobiDB-lite"/>
    </source>
</evidence>
<evidence type="ECO:0000269" key="4">
    <source>
    </source>
</evidence>
<evidence type="ECO:0000269" key="5">
    <source>
    </source>
</evidence>
<evidence type="ECO:0000303" key="6">
    <source>
    </source>
</evidence>
<evidence type="ECO:0000303" key="7">
    <source>
    </source>
</evidence>
<evidence type="ECO:0000303" key="8">
    <source>
    </source>
</evidence>
<evidence type="ECO:0000305" key="9"/>
<evidence type="ECO:0000312" key="10">
    <source>
        <dbReference type="Araport" id="AT4G25650"/>
    </source>
</evidence>
<evidence type="ECO:0000312" key="11">
    <source>
        <dbReference type="EMBL" id="CAB43696.1"/>
    </source>
</evidence>
<organism>
    <name type="scientific">Arabidopsis thaliana</name>
    <name type="common">Mouse-ear cress</name>
    <dbReference type="NCBI Taxonomy" id="3702"/>
    <lineage>
        <taxon>Eukaryota</taxon>
        <taxon>Viridiplantae</taxon>
        <taxon>Streptophyta</taxon>
        <taxon>Embryophyta</taxon>
        <taxon>Tracheophyta</taxon>
        <taxon>Spermatophyta</taxon>
        <taxon>Magnoliopsida</taxon>
        <taxon>eudicotyledons</taxon>
        <taxon>Gunneridae</taxon>
        <taxon>Pentapetalae</taxon>
        <taxon>rosids</taxon>
        <taxon>malvids</taxon>
        <taxon>Brassicales</taxon>
        <taxon>Brassicaceae</taxon>
        <taxon>Camelineae</taxon>
        <taxon>Arabidopsis</taxon>
    </lineage>
</organism>
<keyword id="KW-0001">2Fe-2S</keyword>
<keyword id="KW-0025">Alternative splicing</keyword>
<keyword id="KW-0150">Chloroplast</keyword>
<keyword id="KW-0408">Iron</keyword>
<keyword id="KW-0411">Iron-sulfur</keyword>
<keyword id="KW-0472">Membrane</keyword>
<keyword id="KW-0479">Metal-binding</keyword>
<keyword id="KW-0560">Oxidoreductase</keyword>
<keyword id="KW-0934">Plastid</keyword>
<keyword id="KW-1001">Plastid inner membrane</keyword>
<keyword id="KW-0653">Protein transport</keyword>
<keyword id="KW-1185">Reference proteome</keyword>
<keyword id="KW-0809">Transit peptide</keyword>
<keyword id="KW-0812">Transmembrane</keyword>
<keyword id="KW-1133">Transmembrane helix</keyword>
<keyword id="KW-0813">Transport</keyword>
<dbReference type="EC" id="1.14.15.-" evidence="4"/>
<dbReference type="EMBL" id="AY344062">
    <property type="protein sequence ID" value="AAR05798.1"/>
    <property type="molecule type" value="mRNA"/>
</dbReference>
<dbReference type="EMBL" id="AL050400">
    <property type="protein sequence ID" value="CAB43696.1"/>
    <property type="status" value="ALT_SEQ"/>
    <property type="molecule type" value="Genomic_DNA"/>
</dbReference>
<dbReference type="EMBL" id="AL161563">
    <property type="protein sequence ID" value="CAB81375.1"/>
    <property type="status" value="ALT_SEQ"/>
    <property type="molecule type" value="Genomic_DNA"/>
</dbReference>
<dbReference type="EMBL" id="CP002687">
    <property type="protein sequence ID" value="AEE85088.1"/>
    <property type="molecule type" value="Genomic_DNA"/>
</dbReference>
<dbReference type="EMBL" id="CP002687">
    <property type="protein sequence ID" value="AEE85089.1"/>
    <property type="molecule type" value="Genomic_DNA"/>
</dbReference>
<dbReference type="EMBL" id="AF424575">
    <property type="protein sequence ID" value="AAL11569.1"/>
    <property type="molecule type" value="mRNA"/>
</dbReference>
<dbReference type="EMBL" id="AY056168">
    <property type="protein sequence ID" value="AAL07017.1"/>
    <property type="molecule type" value="mRNA"/>
</dbReference>
<dbReference type="EMBL" id="AY062731">
    <property type="protein sequence ID" value="AAL32809.1"/>
    <property type="molecule type" value="mRNA"/>
</dbReference>
<dbReference type="EMBL" id="BT002586">
    <property type="protein sequence ID" value="AAO00946.1"/>
    <property type="molecule type" value="mRNA"/>
</dbReference>
<dbReference type="PIR" id="T09557">
    <property type="entry name" value="T09557"/>
</dbReference>
<dbReference type="RefSeq" id="NP_567725.1">
    <molecule id="Q8W496-2"/>
    <property type="nucleotide sequence ID" value="NM_118697.4"/>
</dbReference>
<dbReference type="RefSeq" id="NP_849444.1">
    <molecule id="Q8W496-1"/>
    <property type="nucleotide sequence ID" value="NM_179113.2"/>
</dbReference>
<dbReference type="SMR" id="Q8W496"/>
<dbReference type="FunCoup" id="Q8W496">
    <property type="interactions" value="872"/>
</dbReference>
<dbReference type="STRING" id="3702.Q8W496"/>
<dbReference type="GlyGen" id="Q8W496">
    <property type="glycosylation" value="1 site"/>
</dbReference>
<dbReference type="iPTMnet" id="Q8W496"/>
<dbReference type="PaxDb" id="3702-AT4G25650.2"/>
<dbReference type="ProMEX" id="Q8W496"/>
<dbReference type="ProteomicsDB" id="226043">
    <molecule id="Q8W496-1"/>
</dbReference>
<dbReference type="EnsemblPlants" id="AT4G25650.1">
    <molecule id="Q8W496-2"/>
    <property type="protein sequence ID" value="AT4G25650.1"/>
    <property type="gene ID" value="AT4G25650"/>
</dbReference>
<dbReference type="EnsemblPlants" id="AT4G25650.2">
    <molecule id="Q8W496-1"/>
    <property type="protein sequence ID" value="AT4G25650.2"/>
    <property type="gene ID" value="AT4G25650"/>
</dbReference>
<dbReference type="GeneID" id="828670"/>
<dbReference type="Gramene" id="AT4G25650.1">
    <molecule id="Q8W496-2"/>
    <property type="protein sequence ID" value="AT4G25650.1"/>
    <property type="gene ID" value="AT4G25650"/>
</dbReference>
<dbReference type="Gramene" id="AT4G25650.2">
    <molecule id="Q8W496-1"/>
    <property type="protein sequence ID" value="AT4G25650.2"/>
    <property type="gene ID" value="AT4G25650"/>
</dbReference>
<dbReference type="KEGG" id="ath:AT4G25650"/>
<dbReference type="Araport" id="AT4G25650"/>
<dbReference type="TAIR" id="AT4G25650">
    <property type="gene designation" value="ACD1-LIKE"/>
</dbReference>
<dbReference type="eggNOG" id="ENOG502QR6Q">
    <property type="taxonomic scope" value="Eukaryota"/>
</dbReference>
<dbReference type="InParanoid" id="Q8W496"/>
<dbReference type="OMA" id="EPPCRLE"/>
<dbReference type="OrthoDB" id="426882at2759"/>
<dbReference type="PhylomeDB" id="Q8W496"/>
<dbReference type="BioCyc" id="ARA:AT4G25650-MONOMER"/>
<dbReference type="PRO" id="PR:Q8W496"/>
<dbReference type="Proteomes" id="UP000006548">
    <property type="component" value="Chromosome 4"/>
</dbReference>
<dbReference type="ExpressionAtlas" id="Q8W496">
    <property type="expression patterns" value="baseline and differential"/>
</dbReference>
<dbReference type="GO" id="GO:0009941">
    <property type="term" value="C:chloroplast envelope"/>
    <property type="evidence" value="ECO:0007005"/>
    <property type="project" value="TAIR"/>
</dbReference>
<dbReference type="GO" id="GO:0009706">
    <property type="term" value="C:chloroplast inner membrane"/>
    <property type="evidence" value="ECO:0007669"/>
    <property type="project" value="UniProtKB-SubCell"/>
</dbReference>
<dbReference type="GO" id="GO:0005829">
    <property type="term" value="C:cytosol"/>
    <property type="evidence" value="ECO:0007005"/>
    <property type="project" value="TAIR"/>
</dbReference>
<dbReference type="GO" id="GO:0009536">
    <property type="term" value="C:plastid"/>
    <property type="evidence" value="ECO:0007005"/>
    <property type="project" value="TAIR"/>
</dbReference>
<dbReference type="GO" id="GO:0051537">
    <property type="term" value="F:2 iron, 2 sulfur cluster binding"/>
    <property type="evidence" value="ECO:0007669"/>
    <property type="project" value="UniProtKB-KW"/>
</dbReference>
<dbReference type="GO" id="GO:0010277">
    <property type="term" value="F:chlorophyllide a oxygenase activity"/>
    <property type="evidence" value="ECO:0007669"/>
    <property type="project" value="InterPro"/>
</dbReference>
<dbReference type="GO" id="GO:0046872">
    <property type="term" value="F:metal ion binding"/>
    <property type="evidence" value="ECO:0007669"/>
    <property type="project" value="UniProtKB-KW"/>
</dbReference>
<dbReference type="GO" id="GO:0015031">
    <property type="term" value="P:protein transport"/>
    <property type="evidence" value="ECO:0007669"/>
    <property type="project" value="UniProtKB-KW"/>
</dbReference>
<dbReference type="CDD" id="cd03480">
    <property type="entry name" value="Rieske_RO_Alpha_PaO"/>
    <property type="match status" value="1"/>
</dbReference>
<dbReference type="FunFam" id="2.102.10.10:FF:000029">
    <property type="entry name" value="Protochlorophyllide-dependent translocon component 52, chloroplastic"/>
    <property type="match status" value="1"/>
</dbReference>
<dbReference type="Gene3D" id="3.90.380.10">
    <property type="entry name" value="Naphthalene 1,2-dioxygenase Alpha Subunit, Chain A, domain 1"/>
    <property type="match status" value="1"/>
</dbReference>
<dbReference type="Gene3D" id="2.102.10.10">
    <property type="entry name" value="Rieske [2Fe-2S] iron-sulphur domain"/>
    <property type="match status" value="1"/>
</dbReference>
<dbReference type="InterPro" id="IPR050584">
    <property type="entry name" value="Cholesterol_7-desaturase"/>
</dbReference>
<dbReference type="InterPro" id="IPR013626">
    <property type="entry name" value="PaO"/>
</dbReference>
<dbReference type="InterPro" id="IPR017941">
    <property type="entry name" value="Rieske_2Fe-2S"/>
</dbReference>
<dbReference type="InterPro" id="IPR036922">
    <property type="entry name" value="Rieske_2Fe-2S_sf"/>
</dbReference>
<dbReference type="PANTHER" id="PTHR21266:SF32">
    <property type="entry name" value="CHOLESTEROL 7-DESATURASE NVD"/>
    <property type="match status" value="1"/>
</dbReference>
<dbReference type="PANTHER" id="PTHR21266">
    <property type="entry name" value="IRON-SULFUR DOMAIN CONTAINING PROTEIN"/>
    <property type="match status" value="1"/>
</dbReference>
<dbReference type="Pfam" id="PF08417">
    <property type="entry name" value="PaO"/>
    <property type="match status" value="1"/>
</dbReference>
<dbReference type="Pfam" id="PF00355">
    <property type="entry name" value="Rieske"/>
    <property type="match status" value="1"/>
</dbReference>
<dbReference type="SUPFAM" id="SSF55961">
    <property type="entry name" value="Bet v1-like"/>
    <property type="match status" value="1"/>
</dbReference>
<dbReference type="SUPFAM" id="SSF50022">
    <property type="entry name" value="ISP domain"/>
    <property type="match status" value="1"/>
</dbReference>
<dbReference type="PROSITE" id="PS51296">
    <property type="entry name" value="RIESKE"/>
    <property type="match status" value="1"/>
</dbReference>
<sequence length="559" mass="63819">MEAALAACALPSLRILNTKPRFRCSFSNPSLPISPNSLITRKSSRFTTAVSSPPSSSAATSTNSPPEPEALFEPGSDKFDWYANWYPVMPICDLDKKVPHGKKVMGIDLVVWWDRNEKQWKVMDDTCPHRLAPLSDGRIDQWGRLQCVYHGWCFNGSGDCKLIPQAPPDGPPVHTFKQACVAVYPSTVQHEIIWFWPNSDPKYKNIIETNKPPYIPELEDPSFTKLMGNRDIPYGYDVLVENLMDPAHVPYAHYGLMRFPKPKGKYIICISNSCFNPFTNLQILLAEKIDREGGKPLEINVKKLDNKGFFSKQEWGYSNFIAPCVYRSSTDPLPEQEHEYPAPAASDKAALSKRRLSLIFICIPVSPGRSRLIWTFPRNFGVFIDKIVPRWVFHIGQNTILDSDLHLLHVEERKILERGPENWQKACFIPTKSDANVVTFRRWFNKYSEARVDWRGKFDPFLLPPTPPREQLFDRYWSHVENCSSCKKAHKYLNALEVILQIASVAMIGVMAVLKQTTMSNVARIAVLVAAVLSFAASKWLSHFIYKTFHYHDYNHAVV</sequence>
<feature type="transit peptide" description="Chloroplast" evidence="1">
    <location>
        <begin position="1"/>
        <end position="55"/>
    </location>
</feature>
<feature type="chain" id="PRO_0000413679" description="Protochlorophyllide-dependent translocon component 52, chloroplastic">
    <location>
        <begin position="56"/>
        <end position="559"/>
    </location>
</feature>
<feature type="transmembrane region" description="Helical" evidence="1">
    <location>
        <begin position="493"/>
        <end position="513"/>
    </location>
</feature>
<feature type="transmembrane region" description="Helical" evidence="1">
    <location>
        <begin position="525"/>
        <end position="545"/>
    </location>
</feature>
<feature type="domain" description="Rieske" evidence="2">
    <location>
        <begin position="85"/>
        <end position="195"/>
    </location>
</feature>
<feature type="region of interest" description="Disordered" evidence="3">
    <location>
        <begin position="44"/>
        <end position="70"/>
    </location>
</feature>
<feature type="short sequence motif" description="Redox-active motif">
    <location>
        <begin position="483"/>
        <end position="486"/>
    </location>
</feature>
<feature type="compositionally biased region" description="Low complexity" evidence="3">
    <location>
        <begin position="47"/>
        <end position="64"/>
    </location>
</feature>
<feature type="binding site" evidence="2">
    <location>
        <position position="127"/>
    </location>
    <ligand>
        <name>[2Fe-2S] cluster</name>
        <dbReference type="ChEBI" id="CHEBI:190135"/>
    </ligand>
</feature>
<feature type="binding site" evidence="2">
    <location>
        <position position="129"/>
    </location>
    <ligand>
        <name>[2Fe-2S] cluster</name>
        <dbReference type="ChEBI" id="CHEBI:190135"/>
    </ligand>
</feature>
<feature type="binding site" evidence="2">
    <location>
        <position position="147"/>
    </location>
    <ligand>
        <name>[2Fe-2S] cluster</name>
        <dbReference type="ChEBI" id="CHEBI:190135"/>
    </ligand>
</feature>
<feature type="binding site" evidence="2">
    <location>
        <position position="150"/>
    </location>
    <ligand>
        <name>[2Fe-2S] cluster</name>
        <dbReference type="ChEBI" id="CHEBI:190135"/>
    </ligand>
</feature>
<feature type="binding site" evidence="1">
    <location>
        <position position="248"/>
    </location>
    <ligand>
        <name>Fe cation</name>
        <dbReference type="ChEBI" id="CHEBI:24875"/>
    </ligand>
</feature>
<feature type="binding site" evidence="1">
    <location>
        <position position="253"/>
    </location>
    <ligand>
        <name>Fe cation</name>
        <dbReference type="ChEBI" id="CHEBI:24875"/>
    </ligand>
</feature>
<feature type="splice variant" id="VSP_041956" description="In isoform 2." evidence="6 7">
    <location>
        <begin position="264"/>
        <end position="286"/>
    </location>
</feature>
<proteinExistence type="evidence at protein level"/>